<sequence>MTESLLYSGKAKNMFQTDDPEIVHIHYKDQATALNGKVKEKIEGKGQLTSHISALLFNYLTVQGIENHFQKELENGDALVRKVKIVPLEVVTRNFAAGHFASRFNVPMHKALKPAVHEFYFKSDSLDDPFINNEQILALEIADKKTISQMKEEAELINQKLINLFDQIGITLIDFKVEFGFTSQGKLLLADELSPDNMRLLDKESGKSLDKDVFRQKIGDVRIGYQTVLDRLNNKLIAGEN</sequence>
<feature type="chain" id="PRO_1000117838" description="Phosphoribosylaminoimidazole-succinocarboxamide synthase">
    <location>
        <begin position="1"/>
        <end position="241"/>
    </location>
</feature>
<proteinExistence type="inferred from homology"/>
<name>PUR7_OENOB</name>
<protein>
    <recommendedName>
        <fullName evidence="1">Phosphoribosylaminoimidazole-succinocarboxamide synthase</fullName>
        <ecNumber evidence="1">6.3.2.6</ecNumber>
    </recommendedName>
    <alternativeName>
        <fullName evidence="1">SAICAR synthetase</fullName>
    </alternativeName>
</protein>
<keyword id="KW-0067">ATP-binding</keyword>
<keyword id="KW-0436">Ligase</keyword>
<keyword id="KW-0547">Nucleotide-binding</keyword>
<keyword id="KW-0658">Purine biosynthesis</keyword>
<keyword id="KW-1185">Reference proteome</keyword>
<organism>
    <name type="scientific">Oenococcus oeni (strain ATCC BAA-331 / PSU-1)</name>
    <dbReference type="NCBI Taxonomy" id="203123"/>
    <lineage>
        <taxon>Bacteria</taxon>
        <taxon>Bacillati</taxon>
        <taxon>Bacillota</taxon>
        <taxon>Bacilli</taxon>
        <taxon>Lactobacillales</taxon>
        <taxon>Lactobacillaceae</taxon>
        <taxon>Oenococcus</taxon>
    </lineage>
</organism>
<comment type="catalytic activity">
    <reaction evidence="1">
        <text>5-amino-1-(5-phospho-D-ribosyl)imidazole-4-carboxylate + L-aspartate + ATP = (2S)-2-[5-amino-1-(5-phospho-beta-D-ribosyl)imidazole-4-carboxamido]succinate + ADP + phosphate + 2 H(+)</text>
        <dbReference type="Rhea" id="RHEA:22628"/>
        <dbReference type="ChEBI" id="CHEBI:15378"/>
        <dbReference type="ChEBI" id="CHEBI:29991"/>
        <dbReference type="ChEBI" id="CHEBI:30616"/>
        <dbReference type="ChEBI" id="CHEBI:43474"/>
        <dbReference type="ChEBI" id="CHEBI:58443"/>
        <dbReference type="ChEBI" id="CHEBI:77657"/>
        <dbReference type="ChEBI" id="CHEBI:456216"/>
        <dbReference type="EC" id="6.3.2.6"/>
    </reaction>
</comment>
<comment type="pathway">
    <text evidence="1">Purine metabolism; IMP biosynthesis via de novo pathway; 5-amino-1-(5-phospho-D-ribosyl)imidazole-4-carboxamide from 5-amino-1-(5-phospho-D-ribosyl)imidazole-4-carboxylate: step 1/2.</text>
</comment>
<comment type="similarity">
    <text evidence="1">Belongs to the SAICAR synthetase family.</text>
</comment>
<dbReference type="EC" id="6.3.2.6" evidence="1"/>
<dbReference type="EMBL" id="CP000411">
    <property type="protein sequence ID" value="ABJ57032.1"/>
    <property type="molecule type" value="Genomic_DNA"/>
</dbReference>
<dbReference type="RefSeq" id="WP_002823254.1">
    <property type="nucleotide sequence ID" value="NC_008528.1"/>
</dbReference>
<dbReference type="SMR" id="Q04EU0"/>
<dbReference type="STRING" id="203123.OEOE_1136"/>
<dbReference type="KEGG" id="ooe:OEOE_1136"/>
<dbReference type="PATRIC" id="fig|203123.7.peg.1161"/>
<dbReference type="eggNOG" id="COG0152">
    <property type="taxonomic scope" value="Bacteria"/>
</dbReference>
<dbReference type="HOGENOM" id="CLU_061495_2_0_9"/>
<dbReference type="UniPathway" id="UPA00074">
    <property type="reaction ID" value="UER00131"/>
</dbReference>
<dbReference type="Proteomes" id="UP000000774">
    <property type="component" value="Chromosome"/>
</dbReference>
<dbReference type="GO" id="GO:0005524">
    <property type="term" value="F:ATP binding"/>
    <property type="evidence" value="ECO:0007669"/>
    <property type="project" value="UniProtKB-KW"/>
</dbReference>
<dbReference type="GO" id="GO:0004639">
    <property type="term" value="F:phosphoribosylaminoimidazolesuccinocarboxamide synthase activity"/>
    <property type="evidence" value="ECO:0007669"/>
    <property type="project" value="UniProtKB-UniRule"/>
</dbReference>
<dbReference type="GO" id="GO:0006189">
    <property type="term" value="P:'de novo' IMP biosynthetic process"/>
    <property type="evidence" value="ECO:0007669"/>
    <property type="project" value="UniProtKB-UniRule"/>
</dbReference>
<dbReference type="GO" id="GO:0009236">
    <property type="term" value="P:cobalamin biosynthetic process"/>
    <property type="evidence" value="ECO:0007669"/>
    <property type="project" value="InterPro"/>
</dbReference>
<dbReference type="CDD" id="cd01415">
    <property type="entry name" value="SAICAR_synt_PurC"/>
    <property type="match status" value="1"/>
</dbReference>
<dbReference type="Gene3D" id="3.30.470.20">
    <property type="entry name" value="ATP-grasp fold, B domain"/>
    <property type="match status" value="1"/>
</dbReference>
<dbReference type="Gene3D" id="3.30.200.20">
    <property type="entry name" value="Phosphorylase Kinase, domain 1"/>
    <property type="match status" value="1"/>
</dbReference>
<dbReference type="HAMAP" id="MF_00137">
    <property type="entry name" value="SAICAR_synth"/>
    <property type="match status" value="1"/>
</dbReference>
<dbReference type="InterPro" id="IPR028923">
    <property type="entry name" value="SAICAR_synt/ADE2_N"/>
</dbReference>
<dbReference type="InterPro" id="IPR033934">
    <property type="entry name" value="SAICAR_synt_PurC"/>
</dbReference>
<dbReference type="InterPro" id="IPR001636">
    <property type="entry name" value="SAICAR_synth"/>
</dbReference>
<dbReference type="InterPro" id="IPR050089">
    <property type="entry name" value="SAICAR_synthetase"/>
</dbReference>
<dbReference type="NCBIfam" id="TIGR00081">
    <property type="entry name" value="purC"/>
    <property type="match status" value="1"/>
</dbReference>
<dbReference type="PANTHER" id="PTHR43599">
    <property type="entry name" value="MULTIFUNCTIONAL PROTEIN ADE2"/>
    <property type="match status" value="1"/>
</dbReference>
<dbReference type="PANTHER" id="PTHR43599:SF3">
    <property type="entry name" value="SI:DKEY-6E2.2"/>
    <property type="match status" value="1"/>
</dbReference>
<dbReference type="Pfam" id="PF01259">
    <property type="entry name" value="SAICAR_synt"/>
    <property type="match status" value="1"/>
</dbReference>
<dbReference type="SUPFAM" id="SSF56104">
    <property type="entry name" value="SAICAR synthase-like"/>
    <property type="match status" value="1"/>
</dbReference>
<reference key="1">
    <citation type="journal article" date="2006" name="Proc. Natl. Acad. Sci. U.S.A.">
        <title>Comparative genomics of the lactic acid bacteria.</title>
        <authorList>
            <person name="Makarova K.S."/>
            <person name="Slesarev A."/>
            <person name="Wolf Y.I."/>
            <person name="Sorokin A."/>
            <person name="Mirkin B."/>
            <person name="Koonin E.V."/>
            <person name="Pavlov A."/>
            <person name="Pavlova N."/>
            <person name="Karamychev V."/>
            <person name="Polouchine N."/>
            <person name="Shakhova V."/>
            <person name="Grigoriev I."/>
            <person name="Lou Y."/>
            <person name="Rohksar D."/>
            <person name="Lucas S."/>
            <person name="Huang K."/>
            <person name="Goodstein D.M."/>
            <person name="Hawkins T."/>
            <person name="Plengvidhya V."/>
            <person name="Welker D."/>
            <person name="Hughes J."/>
            <person name="Goh Y."/>
            <person name="Benson A."/>
            <person name="Baldwin K."/>
            <person name="Lee J.-H."/>
            <person name="Diaz-Muniz I."/>
            <person name="Dosti B."/>
            <person name="Smeianov V."/>
            <person name="Wechter W."/>
            <person name="Barabote R."/>
            <person name="Lorca G."/>
            <person name="Altermann E."/>
            <person name="Barrangou R."/>
            <person name="Ganesan B."/>
            <person name="Xie Y."/>
            <person name="Rawsthorne H."/>
            <person name="Tamir D."/>
            <person name="Parker C."/>
            <person name="Breidt F."/>
            <person name="Broadbent J.R."/>
            <person name="Hutkins R."/>
            <person name="O'Sullivan D."/>
            <person name="Steele J."/>
            <person name="Unlu G."/>
            <person name="Saier M.H. Jr."/>
            <person name="Klaenhammer T."/>
            <person name="Richardson P."/>
            <person name="Kozyavkin S."/>
            <person name="Weimer B.C."/>
            <person name="Mills D.A."/>
        </authorList>
    </citation>
    <scope>NUCLEOTIDE SEQUENCE [LARGE SCALE GENOMIC DNA]</scope>
    <source>
        <strain>ATCC BAA-331 / PSU-1</strain>
    </source>
</reference>
<evidence type="ECO:0000255" key="1">
    <source>
        <dbReference type="HAMAP-Rule" id="MF_00137"/>
    </source>
</evidence>
<accession>Q04EU0</accession>
<gene>
    <name evidence="1" type="primary">purC</name>
    <name type="ordered locus">OEOE_1136</name>
</gene>